<gene>
    <name type="ordered locus">MPN_388</name>
    <name type="ORF">MP449.1</name>
</gene>
<sequence>MSNFFEKYINGFIETLDQIDAADFQRIQHDFDPNQFPYDWVVERVSDVKDYLLNPRDFSDVETFKSTMRAKIKHFYACYSSKIPFFLFTSFVLAIFNSVGQYVKYHCDLDFTNPDAVTIFFREKALND</sequence>
<accession>Q9EXD4</accession>
<reference key="1">
    <citation type="journal article" date="1996" name="Nucleic Acids Res.">
        <title>Complete sequence analysis of the genome of the bacterium Mycoplasma pneumoniae.</title>
        <authorList>
            <person name="Himmelreich R."/>
            <person name="Hilbert H."/>
            <person name="Plagens H."/>
            <person name="Pirkl E."/>
            <person name="Li B.-C."/>
            <person name="Herrmann R."/>
        </authorList>
    </citation>
    <scope>NUCLEOTIDE SEQUENCE [LARGE SCALE GENOMIC DNA]</scope>
    <source>
        <strain>ATCC 29342 / M129 / Subtype 1</strain>
    </source>
</reference>
<reference key="2">
    <citation type="journal article" date="2000" name="Nucleic Acids Res.">
        <title>Re-annotating the Mycoplasma pneumoniae genome sequence: adding value, function and reading frames.</title>
        <authorList>
            <person name="Dandekar T."/>
            <person name="Huynen M."/>
            <person name="Regula J.T."/>
            <person name="Ueberle B."/>
            <person name="Zimmermann C.U."/>
            <person name="Andrade M.A."/>
            <person name="Doerks T."/>
            <person name="Sanchez-Pulido L."/>
            <person name="Snel B."/>
            <person name="Suyama M."/>
            <person name="Yuan Y.P."/>
            <person name="Herrmann R."/>
            <person name="Bork P."/>
        </authorList>
    </citation>
    <scope>IDENTIFICATION</scope>
    <source>
        <strain>ATCC 29342 / M129 / Subtype 1</strain>
    </source>
</reference>
<organism>
    <name type="scientific">Mycoplasma pneumoniae (strain ATCC 29342 / M129 / Subtype 1)</name>
    <name type="common">Mycoplasmoides pneumoniae</name>
    <dbReference type="NCBI Taxonomy" id="272634"/>
    <lineage>
        <taxon>Bacteria</taxon>
        <taxon>Bacillati</taxon>
        <taxon>Mycoplasmatota</taxon>
        <taxon>Mycoplasmoidales</taxon>
        <taxon>Mycoplasmoidaceae</taxon>
        <taxon>Mycoplasmoides</taxon>
    </lineage>
</organism>
<name>Y388_MYCPN</name>
<protein>
    <recommendedName>
        <fullName>Uncharacterized protein MG269.1 homolog</fullName>
    </recommendedName>
</protein>
<proteinExistence type="predicted"/>
<feature type="chain" id="PRO_0000210501" description="Uncharacterized protein MG269.1 homolog">
    <location>
        <begin position="1"/>
        <end position="128"/>
    </location>
</feature>
<dbReference type="EMBL" id="U00089">
    <property type="protein sequence ID" value="AAG34751.2"/>
    <property type="molecule type" value="Genomic_DNA"/>
</dbReference>
<dbReference type="RefSeq" id="WP_015344909.1">
    <property type="nucleotide sequence ID" value="NZ_OU342337.1"/>
</dbReference>
<dbReference type="SMR" id="Q9EXD4"/>
<dbReference type="IntAct" id="Q9EXD4">
    <property type="interactions" value="2"/>
</dbReference>
<dbReference type="STRING" id="272634.MPN_388"/>
<dbReference type="EnsemblBacteria" id="AAG34751">
    <property type="protein sequence ID" value="AAG34751"/>
    <property type="gene ID" value="MPN_388"/>
</dbReference>
<dbReference type="KEGG" id="mpn:MPN_388"/>
<dbReference type="HOGENOM" id="CLU_1957168_0_0_14"/>
<dbReference type="Proteomes" id="UP000000808">
    <property type="component" value="Chromosome"/>
</dbReference>
<keyword id="KW-1185">Reference proteome</keyword>